<gene>
    <name evidence="1" type="primary">mdtH</name>
    <name type="ordered locus">SSON_1085</name>
</gene>
<dbReference type="EMBL" id="CP000038">
    <property type="protein sequence ID" value="AAZ87811.1"/>
    <property type="status" value="ALT_INIT"/>
    <property type="molecule type" value="Genomic_DNA"/>
</dbReference>
<dbReference type="RefSeq" id="WP_000092189.1">
    <property type="nucleotide sequence ID" value="NC_007384.1"/>
</dbReference>
<dbReference type="SMR" id="Q3Z351"/>
<dbReference type="GeneID" id="93776342"/>
<dbReference type="KEGG" id="ssn:SSON_1085"/>
<dbReference type="HOGENOM" id="CLU_001265_60_2_6"/>
<dbReference type="Proteomes" id="UP000002529">
    <property type="component" value="Chromosome"/>
</dbReference>
<dbReference type="GO" id="GO:0005886">
    <property type="term" value="C:plasma membrane"/>
    <property type="evidence" value="ECO:0007669"/>
    <property type="project" value="UniProtKB-SubCell"/>
</dbReference>
<dbReference type="GO" id="GO:0022857">
    <property type="term" value="F:transmembrane transporter activity"/>
    <property type="evidence" value="ECO:0007669"/>
    <property type="project" value="UniProtKB-UniRule"/>
</dbReference>
<dbReference type="CDD" id="cd17329">
    <property type="entry name" value="MFS_MdtH_MDR_like"/>
    <property type="match status" value="1"/>
</dbReference>
<dbReference type="FunFam" id="1.20.1250.20:FF:000039">
    <property type="entry name" value="Multidrug resistance protein MdtH"/>
    <property type="match status" value="1"/>
</dbReference>
<dbReference type="Gene3D" id="1.20.1250.20">
    <property type="entry name" value="MFS general substrate transporter like domains"/>
    <property type="match status" value="1"/>
</dbReference>
<dbReference type="HAMAP" id="MF_01529">
    <property type="entry name" value="MFS_MdtH"/>
    <property type="match status" value="1"/>
</dbReference>
<dbReference type="InterPro" id="IPR011701">
    <property type="entry name" value="MFS"/>
</dbReference>
<dbReference type="InterPro" id="IPR020846">
    <property type="entry name" value="MFS_dom"/>
</dbReference>
<dbReference type="InterPro" id="IPR036259">
    <property type="entry name" value="MFS_trans_sf"/>
</dbReference>
<dbReference type="InterPro" id="IPR050171">
    <property type="entry name" value="MFS_Transporters"/>
</dbReference>
<dbReference type="InterPro" id="IPR022855">
    <property type="entry name" value="Multidrug-R_MdtH"/>
</dbReference>
<dbReference type="NCBIfam" id="NF008650">
    <property type="entry name" value="PRK11646.1"/>
    <property type="match status" value="1"/>
</dbReference>
<dbReference type="PANTHER" id="PTHR23517:SF2">
    <property type="entry name" value="MULTIDRUG RESISTANCE PROTEIN MDTH"/>
    <property type="match status" value="1"/>
</dbReference>
<dbReference type="PANTHER" id="PTHR23517">
    <property type="entry name" value="RESISTANCE PROTEIN MDTM, PUTATIVE-RELATED-RELATED"/>
    <property type="match status" value="1"/>
</dbReference>
<dbReference type="Pfam" id="PF07690">
    <property type="entry name" value="MFS_1"/>
    <property type="match status" value="1"/>
</dbReference>
<dbReference type="SUPFAM" id="SSF103473">
    <property type="entry name" value="MFS general substrate transporter"/>
    <property type="match status" value="1"/>
</dbReference>
<dbReference type="PROSITE" id="PS50850">
    <property type="entry name" value="MFS"/>
    <property type="match status" value="1"/>
</dbReference>
<keyword id="KW-0997">Cell inner membrane</keyword>
<keyword id="KW-1003">Cell membrane</keyword>
<keyword id="KW-0472">Membrane</keyword>
<keyword id="KW-1185">Reference proteome</keyword>
<keyword id="KW-0812">Transmembrane</keyword>
<keyword id="KW-1133">Transmembrane helix</keyword>
<keyword id="KW-0813">Transport</keyword>
<accession>Q3Z351</accession>
<feature type="chain" id="PRO_0000280502" description="Multidrug resistance protein MdtH">
    <location>
        <begin position="1"/>
        <end position="402"/>
    </location>
</feature>
<feature type="topological domain" description="Cytoplasmic" evidence="1">
    <location>
        <begin position="1"/>
        <end position="12"/>
    </location>
</feature>
<feature type="transmembrane region" description="Helical" evidence="1">
    <location>
        <begin position="13"/>
        <end position="33"/>
    </location>
</feature>
<feature type="topological domain" description="Periplasmic" evidence="1">
    <location>
        <begin position="34"/>
        <end position="98"/>
    </location>
</feature>
<feature type="transmembrane region" description="Helical" evidence="1">
    <location>
        <begin position="99"/>
        <end position="116"/>
    </location>
</feature>
<feature type="topological domain" description="Cytoplasmic" evidence="1">
    <location>
        <begin position="117"/>
        <end position="138"/>
    </location>
</feature>
<feature type="transmembrane region" description="Helical" evidence="1">
    <location>
        <begin position="139"/>
        <end position="159"/>
    </location>
</feature>
<feature type="topological domain" description="Periplasmic" evidence="1">
    <location>
        <begin position="160"/>
        <end position="164"/>
    </location>
</feature>
<feature type="transmembrane region" description="Helical" evidence="1">
    <location>
        <begin position="165"/>
        <end position="185"/>
    </location>
</feature>
<feature type="topological domain" description="Cytoplasmic" evidence="1">
    <location>
        <begin position="186"/>
        <end position="213"/>
    </location>
</feature>
<feature type="transmembrane region" description="Helical" evidence="1">
    <location>
        <begin position="214"/>
        <end position="234"/>
    </location>
</feature>
<feature type="topological domain" description="Periplasmic" evidence="1">
    <location>
        <begin position="235"/>
        <end position="243"/>
    </location>
</feature>
<feature type="transmembrane region" description="Helical" evidence="1">
    <location>
        <begin position="244"/>
        <end position="264"/>
    </location>
</feature>
<feature type="topological domain" description="Cytoplasmic" evidence="1">
    <location>
        <begin position="265"/>
        <end position="276"/>
    </location>
</feature>
<feature type="transmembrane region" description="Helical" evidence="1">
    <location>
        <begin position="277"/>
        <end position="297"/>
    </location>
</feature>
<feature type="topological domain" description="Periplasmic" evidence="1">
    <location>
        <begin position="298"/>
        <end position="299"/>
    </location>
</feature>
<feature type="transmembrane region" description="Helical" evidence="1">
    <location>
        <begin position="300"/>
        <end position="320"/>
    </location>
</feature>
<feature type="topological domain" description="Cytoplasmic" evidence="1">
    <location>
        <begin position="321"/>
        <end position="339"/>
    </location>
</feature>
<feature type="transmembrane region" description="Helical" evidence="1">
    <location>
        <begin position="340"/>
        <end position="360"/>
    </location>
</feature>
<feature type="topological domain" description="Periplasmic" evidence="1">
    <location>
        <begin position="361"/>
        <end position="367"/>
    </location>
</feature>
<feature type="transmembrane region" description="Helical" evidence="1">
    <location>
        <begin position="368"/>
        <end position="388"/>
    </location>
</feature>
<feature type="topological domain" description="Cytoplasmic" evidence="1">
    <location>
        <begin position="389"/>
        <end position="402"/>
    </location>
</feature>
<organism>
    <name type="scientific">Shigella sonnei (strain Ss046)</name>
    <dbReference type="NCBI Taxonomy" id="300269"/>
    <lineage>
        <taxon>Bacteria</taxon>
        <taxon>Pseudomonadati</taxon>
        <taxon>Pseudomonadota</taxon>
        <taxon>Gammaproteobacteria</taxon>
        <taxon>Enterobacterales</taxon>
        <taxon>Enterobacteriaceae</taxon>
        <taxon>Shigella</taxon>
    </lineage>
</organism>
<reference key="1">
    <citation type="journal article" date="2005" name="Nucleic Acids Res.">
        <title>Genome dynamics and diversity of Shigella species, the etiologic agents of bacillary dysentery.</title>
        <authorList>
            <person name="Yang F."/>
            <person name="Yang J."/>
            <person name="Zhang X."/>
            <person name="Chen L."/>
            <person name="Jiang Y."/>
            <person name="Yan Y."/>
            <person name="Tang X."/>
            <person name="Wang J."/>
            <person name="Xiong Z."/>
            <person name="Dong J."/>
            <person name="Xue Y."/>
            <person name="Zhu Y."/>
            <person name="Xu X."/>
            <person name="Sun L."/>
            <person name="Chen S."/>
            <person name="Nie H."/>
            <person name="Peng J."/>
            <person name="Xu J."/>
            <person name="Wang Y."/>
            <person name="Yuan Z."/>
            <person name="Wen Y."/>
            <person name="Yao Z."/>
            <person name="Shen Y."/>
            <person name="Qiang B."/>
            <person name="Hou Y."/>
            <person name="Yu J."/>
            <person name="Jin Q."/>
        </authorList>
    </citation>
    <scope>NUCLEOTIDE SEQUENCE [LARGE SCALE GENOMIC DNA]</scope>
    <source>
        <strain>Ss046</strain>
    </source>
</reference>
<name>MDTH_SHISS</name>
<evidence type="ECO:0000255" key="1">
    <source>
        <dbReference type="HAMAP-Rule" id="MF_01529"/>
    </source>
</evidence>
<evidence type="ECO:0000305" key="2"/>
<proteinExistence type="inferred from homology"/>
<comment type="subcellular location">
    <subcellularLocation>
        <location evidence="1">Cell inner membrane</location>
        <topology evidence="1">Multi-pass membrane protein</topology>
    </subcellularLocation>
</comment>
<comment type="similarity">
    <text evidence="1">Belongs to the major facilitator superfamily. DHA1 family. MdtH (TC 2.A.1.2.21) subfamily.</text>
</comment>
<comment type="sequence caution" evidence="2">
    <conflict type="erroneous initiation">
        <sequence resource="EMBL-CDS" id="AAZ87811"/>
    </conflict>
</comment>
<sequence>MSRVSQARNLGKYFLLIDNMLVVLGFFVVFPLISIRFVDQMGWAAVMVGIALGLRQFIQQGLGIFGGAIADRFGAKPMIVTGMLMRAAGFATMGIAHEPWLLWFSCLLSGLGGTLFDPPRSALVVKLIRPQQRCRFFSLLMMQDSAGAVIGALLGSWLLQYDFRLVCATGAVLFVLCAAFNAWLLPAWKLSTVRTPVREGMTRVMRDKRFVTYVLTLAGYYMLAVQVMLMLPIMVNDVAGAPSAVKWMYAIEACLSLTLLYPIARWSEKHFRLEHRLMAGLLIMSLSMMPVGMVSGLQQLFTLICLFYIGSIIAEPARETLSALLADARARGSYMGFSRLGLAIGGAIGYIGGGWLFDLGKSAHQPELPWMMLGIIGIFTFLALGWQFSQKRATRRLLERDA</sequence>
<protein>
    <recommendedName>
        <fullName evidence="1">Multidrug resistance protein MdtH</fullName>
    </recommendedName>
</protein>